<name>RL24_LARHH</name>
<evidence type="ECO:0000255" key="1">
    <source>
        <dbReference type="HAMAP-Rule" id="MF_01326"/>
    </source>
</evidence>
<evidence type="ECO:0000305" key="2"/>
<organism>
    <name type="scientific">Laribacter hongkongensis (strain HLHK9)</name>
    <dbReference type="NCBI Taxonomy" id="557598"/>
    <lineage>
        <taxon>Bacteria</taxon>
        <taxon>Pseudomonadati</taxon>
        <taxon>Pseudomonadota</taxon>
        <taxon>Betaproteobacteria</taxon>
        <taxon>Neisseriales</taxon>
        <taxon>Aquaspirillaceae</taxon>
        <taxon>Laribacter</taxon>
    </lineage>
</organism>
<keyword id="KW-1185">Reference proteome</keyword>
<keyword id="KW-0687">Ribonucleoprotein</keyword>
<keyword id="KW-0689">Ribosomal protein</keyword>
<keyword id="KW-0694">RNA-binding</keyword>
<keyword id="KW-0699">rRNA-binding</keyword>
<accession>C1DAS8</accession>
<protein>
    <recommendedName>
        <fullName evidence="1">Large ribosomal subunit protein uL24</fullName>
    </recommendedName>
    <alternativeName>
        <fullName evidence="2">50S ribosomal protein L24</fullName>
    </alternativeName>
</protein>
<sequence length="106" mass="11355">MQKIRKGDEVVVITGKDKGKRGTVLRVLPTEGRVVVEGVNVVKKHQKPNPVKGQAGGIVDKTLSIDVSNVAIFNPATQKADRVGVKTLEDGRKVRVFKSNGELVGA</sequence>
<gene>
    <name evidence="1" type="primary">rplX</name>
    <name type="ordered locus">LHK_00264</name>
</gene>
<comment type="function">
    <text evidence="1">One of two assembly initiator proteins, it binds directly to the 5'-end of the 23S rRNA, where it nucleates assembly of the 50S subunit.</text>
</comment>
<comment type="function">
    <text evidence="1">One of the proteins that surrounds the polypeptide exit tunnel on the outside of the subunit.</text>
</comment>
<comment type="subunit">
    <text evidence="1">Part of the 50S ribosomal subunit.</text>
</comment>
<comment type="similarity">
    <text evidence="1">Belongs to the universal ribosomal protein uL24 family.</text>
</comment>
<dbReference type="EMBL" id="CP001154">
    <property type="protein sequence ID" value="ACO73259.1"/>
    <property type="molecule type" value="Genomic_DNA"/>
</dbReference>
<dbReference type="RefSeq" id="WP_012695753.1">
    <property type="nucleotide sequence ID" value="NC_012559.1"/>
</dbReference>
<dbReference type="SMR" id="C1DAS8"/>
<dbReference type="STRING" id="557598.LHK_00264"/>
<dbReference type="GeneID" id="75109496"/>
<dbReference type="KEGG" id="lhk:LHK_00264"/>
<dbReference type="eggNOG" id="COG0198">
    <property type="taxonomic scope" value="Bacteria"/>
</dbReference>
<dbReference type="HOGENOM" id="CLU_093315_2_2_4"/>
<dbReference type="Proteomes" id="UP000002010">
    <property type="component" value="Chromosome"/>
</dbReference>
<dbReference type="GO" id="GO:1990904">
    <property type="term" value="C:ribonucleoprotein complex"/>
    <property type="evidence" value="ECO:0007669"/>
    <property type="project" value="UniProtKB-KW"/>
</dbReference>
<dbReference type="GO" id="GO:0005840">
    <property type="term" value="C:ribosome"/>
    <property type="evidence" value="ECO:0007669"/>
    <property type="project" value="UniProtKB-KW"/>
</dbReference>
<dbReference type="GO" id="GO:0019843">
    <property type="term" value="F:rRNA binding"/>
    <property type="evidence" value="ECO:0007669"/>
    <property type="project" value="UniProtKB-UniRule"/>
</dbReference>
<dbReference type="GO" id="GO:0003735">
    <property type="term" value="F:structural constituent of ribosome"/>
    <property type="evidence" value="ECO:0007669"/>
    <property type="project" value="InterPro"/>
</dbReference>
<dbReference type="GO" id="GO:0006412">
    <property type="term" value="P:translation"/>
    <property type="evidence" value="ECO:0007669"/>
    <property type="project" value="UniProtKB-UniRule"/>
</dbReference>
<dbReference type="CDD" id="cd06089">
    <property type="entry name" value="KOW_RPL26"/>
    <property type="match status" value="1"/>
</dbReference>
<dbReference type="FunFam" id="2.30.30.30:FF:000004">
    <property type="entry name" value="50S ribosomal protein L24"/>
    <property type="match status" value="1"/>
</dbReference>
<dbReference type="Gene3D" id="2.30.30.30">
    <property type="match status" value="1"/>
</dbReference>
<dbReference type="HAMAP" id="MF_01326_B">
    <property type="entry name" value="Ribosomal_uL24_B"/>
    <property type="match status" value="1"/>
</dbReference>
<dbReference type="InterPro" id="IPR005824">
    <property type="entry name" value="KOW"/>
</dbReference>
<dbReference type="InterPro" id="IPR014722">
    <property type="entry name" value="Rib_uL2_dom2"/>
</dbReference>
<dbReference type="InterPro" id="IPR003256">
    <property type="entry name" value="Ribosomal_uL24"/>
</dbReference>
<dbReference type="InterPro" id="IPR005825">
    <property type="entry name" value="Ribosomal_uL24_CS"/>
</dbReference>
<dbReference type="InterPro" id="IPR041988">
    <property type="entry name" value="Ribosomal_uL24_KOW"/>
</dbReference>
<dbReference type="InterPro" id="IPR008991">
    <property type="entry name" value="Translation_prot_SH3-like_sf"/>
</dbReference>
<dbReference type="NCBIfam" id="TIGR01079">
    <property type="entry name" value="rplX_bact"/>
    <property type="match status" value="1"/>
</dbReference>
<dbReference type="PANTHER" id="PTHR12903">
    <property type="entry name" value="MITOCHONDRIAL RIBOSOMAL PROTEIN L24"/>
    <property type="match status" value="1"/>
</dbReference>
<dbReference type="Pfam" id="PF00467">
    <property type="entry name" value="KOW"/>
    <property type="match status" value="1"/>
</dbReference>
<dbReference type="Pfam" id="PF17136">
    <property type="entry name" value="ribosomal_L24"/>
    <property type="match status" value="1"/>
</dbReference>
<dbReference type="SMART" id="SM00739">
    <property type="entry name" value="KOW"/>
    <property type="match status" value="1"/>
</dbReference>
<dbReference type="SUPFAM" id="SSF50104">
    <property type="entry name" value="Translation proteins SH3-like domain"/>
    <property type="match status" value="1"/>
</dbReference>
<dbReference type="PROSITE" id="PS01108">
    <property type="entry name" value="RIBOSOMAL_L24"/>
    <property type="match status" value="1"/>
</dbReference>
<reference key="1">
    <citation type="journal article" date="2009" name="PLoS Genet.">
        <title>The complete genome and proteome of Laribacter hongkongensis reveal potential mechanisms for adaptations to different temperatures and habitats.</title>
        <authorList>
            <person name="Woo P.C.Y."/>
            <person name="Lau S.K.P."/>
            <person name="Tse H."/>
            <person name="Teng J.L.L."/>
            <person name="Curreem S.O."/>
            <person name="Tsang A.K.L."/>
            <person name="Fan R.Y.Y."/>
            <person name="Wong G.K.M."/>
            <person name="Huang Y."/>
            <person name="Loman N.J."/>
            <person name="Snyder L.A.S."/>
            <person name="Cai J.J."/>
            <person name="Huang J.-D."/>
            <person name="Mak W."/>
            <person name="Pallen M.J."/>
            <person name="Lok S."/>
            <person name="Yuen K.-Y."/>
        </authorList>
    </citation>
    <scope>NUCLEOTIDE SEQUENCE [LARGE SCALE GENOMIC DNA]</scope>
    <source>
        <strain>HLHK9</strain>
    </source>
</reference>
<proteinExistence type="inferred from homology"/>
<feature type="chain" id="PRO_1000165949" description="Large ribosomal subunit protein uL24">
    <location>
        <begin position="1"/>
        <end position="106"/>
    </location>
</feature>